<feature type="chain" id="PRO_1000065325" description="Acetyl-coenzyme A synthetase">
    <location>
        <begin position="1"/>
        <end position="650"/>
    </location>
</feature>
<feature type="binding site" evidence="1">
    <location>
        <begin position="191"/>
        <end position="194"/>
    </location>
    <ligand>
        <name>CoA</name>
        <dbReference type="ChEBI" id="CHEBI:57287"/>
    </ligand>
</feature>
<feature type="binding site" evidence="1">
    <location>
        <position position="311"/>
    </location>
    <ligand>
        <name>CoA</name>
        <dbReference type="ChEBI" id="CHEBI:57287"/>
    </ligand>
</feature>
<feature type="binding site" evidence="1">
    <location>
        <position position="335"/>
    </location>
    <ligand>
        <name>CoA</name>
        <dbReference type="ChEBI" id="CHEBI:57287"/>
    </ligand>
</feature>
<feature type="binding site" evidence="1">
    <location>
        <begin position="387"/>
        <end position="389"/>
    </location>
    <ligand>
        <name>ATP</name>
        <dbReference type="ChEBI" id="CHEBI:30616"/>
    </ligand>
</feature>
<feature type="binding site" evidence="1">
    <location>
        <begin position="411"/>
        <end position="416"/>
    </location>
    <ligand>
        <name>ATP</name>
        <dbReference type="ChEBI" id="CHEBI:30616"/>
    </ligand>
</feature>
<feature type="binding site" evidence="1">
    <location>
        <position position="500"/>
    </location>
    <ligand>
        <name>ATP</name>
        <dbReference type="ChEBI" id="CHEBI:30616"/>
    </ligand>
</feature>
<feature type="binding site" evidence="1">
    <location>
        <position position="515"/>
    </location>
    <ligand>
        <name>ATP</name>
        <dbReference type="ChEBI" id="CHEBI:30616"/>
    </ligand>
</feature>
<feature type="binding site" evidence="1">
    <location>
        <position position="523"/>
    </location>
    <ligand>
        <name>CoA</name>
        <dbReference type="ChEBI" id="CHEBI:57287"/>
    </ligand>
</feature>
<feature type="binding site" evidence="1">
    <location>
        <position position="526"/>
    </location>
    <ligand>
        <name>ATP</name>
        <dbReference type="ChEBI" id="CHEBI:30616"/>
    </ligand>
</feature>
<feature type="binding site" evidence="1">
    <location>
        <position position="537"/>
    </location>
    <ligand>
        <name>Mg(2+)</name>
        <dbReference type="ChEBI" id="CHEBI:18420"/>
    </ligand>
</feature>
<feature type="binding site" evidence="1">
    <location>
        <position position="539"/>
    </location>
    <ligand>
        <name>Mg(2+)</name>
        <dbReference type="ChEBI" id="CHEBI:18420"/>
    </ligand>
</feature>
<feature type="binding site" evidence="1">
    <location>
        <position position="542"/>
    </location>
    <ligand>
        <name>Mg(2+)</name>
        <dbReference type="ChEBI" id="CHEBI:18420"/>
    </ligand>
</feature>
<feature type="binding site" evidence="1">
    <location>
        <position position="584"/>
    </location>
    <ligand>
        <name>CoA</name>
        <dbReference type="ChEBI" id="CHEBI:57287"/>
    </ligand>
</feature>
<feature type="modified residue" description="N6-acetyllysine" evidence="1">
    <location>
        <position position="609"/>
    </location>
</feature>
<organism>
    <name type="scientific">Shewanella sp. (strain W3-18-1)</name>
    <dbReference type="NCBI Taxonomy" id="351745"/>
    <lineage>
        <taxon>Bacteria</taxon>
        <taxon>Pseudomonadati</taxon>
        <taxon>Pseudomonadota</taxon>
        <taxon>Gammaproteobacteria</taxon>
        <taxon>Alteromonadales</taxon>
        <taxon>Shewanellaceae</taxon>
        <taxon>Shewanella</taxon>
    </lineage>
</organism>
<evidence type="ECO:0000255" key="1">
    <source>
        <dbReference type="HAMAP-Rule" id="MF_01123"/>
    </source>
</evidence>
<name>ACSA_SHESW</name>
<dbReference type="EC" id="6.2.1.1" evidence="1"/>
<dbReference type="EMBL" id="CP000503">
    <property type="protein sequence ID" value="ABM24496.1"/>
    <property type="molecule type" value="Genomic_DNA"/>
</dbReference>
<dbReference type="RefSeq" id="WP_011788994.1">
    <property type="nucleotide sequence ID" value="NC_008750.1"/>
</dbReference>
<dbReference type="SMR" id="A1RIK1"/>
<dbReference type="KEGG" id="shw:Sputw3181_1659"/>
<dbReference type="HOGENOM" id="CLU_000022_3_6_6"/>
<dbReference type="Proteomes" id="UP000002597">
    <property type="component" value="Chromosome"/>
</dbReference>
<dbReference type="GO" id="GO:0005829">
    <property type="term" value="C:cytosol"/>
    <property type="evidence" value="ECO:0007669"/>
    <property type="project" value="TreeGrafter"/>
</dbReference>
<dbReference type="GO" id="GO:0003987">
    <property type="term" value="F:acetate-CoA ligase activity"/>
    <property type="evidence" value="ECO:0007669"/>
    <property type="project" value="UniProtKB-UniRule"/>
</dbReference>
<dbReference type="GO" id="GO:0016208">
    <property type="term" value="F:AMP binding"/>
    <property type="evidence" value="ECO:0007669"/>
    <property type="project" value="InterPro"/>
</dbReference>
<dbReference type="GO" id="GO:0005524">
    <property type="term" value="F:ATP binding"/>
    <property type="evidence" value="ECO:0007669"/>
    <property type="project" value="UniProtKB-KW"/>
</dbReference>
<dbReference type="GO" id="GO:0046872">
    <property type="term" value="F:metal ion binding"/>
    <property type="evidence" value="ECO:0007669"/>
    <property type="project" value="UniProtKB-KW"/>
</dbReference>
<dbReference type="GO" id="GO:0019427">
    <property type="term" value="P:acetyl-CoA biosynthetic process from acetate"/>
    <property type="evidence" value="ECO:0007669"/>
    <property type="project" value="InterPro"/>
</dbReference>
<dbReference type="CDD" id="cd05966">
    <property type="entry name" value="ACS"/>
    <property type="match status" value="1"/>
</dbReference>
<dbReference type="FunFam" id="3.30.300.30:FF:000004">
    <property type="entry name" value="Acetyl-coenzyme A synthetase"/>
    <property type="match status" value="1"/>
</dbReference>
<dbReference type="FunFam" id="3.40.50.12780:FF:000001">
    <property type="entry name" value="Acetyl-coenzyme A synthetase"/>
    <property type="match status" value="1"/>
</dbReference>
<dbReference type="Gene3D" id="3.30.300.30">
    <property type="match status" value="1"/>
</dbReference>
<dbReference type="Gene3D" id="3.40.50.12780">
    <property type="entry name" value="N-terminal domain of ligase-like"/>
    <property type="match status" value="1"/>
</dbReference>
<dbReference type="HAMAP" id="MF_01123">
    <property type="entry name" value="Ac_CoA_synth"/>
    <property type="match status" value="1"/>
</dbReference>
<dbReference type="InterPro" id="IPR011904">
    <property type="entry name" value="Ac_CoA_lig"/>
</dbReference>
<dbReference type="InterPro" id="IPR032387">
    <property type="entry name" value="ACAS_N"/>
</dbReference>
<dbReference type="InterPro" id="IPR025110">
    <property type="entry name" value="AMP-bd_C"/>
</dbReference>
<dbReference type="InterPro" id="IPR045851">
    <property type="entry name" value="AMP-bd_C_sf"/>
</dbReference>
<dbReference type="InterPro" id="IPR020845">
    <property type="entry name" value="AMP-binding_CS"/>
</dbReference>
<dbReference type="InterPro" id="IPR000873">
    <property type="entry name" value="AMP-dep_synth/lig_dom"/>
</dbReference>
<dbReference type="InterPro" id="IPR042099">
    <property type="entry name" value="ANL_N_sf"/>
</dbReference>
<dbReference type="NCBIfam" id="TIGR02188">
    <property type="entry name" value="Ac_CoA_lig_AcsA"/>
    <property type="match status" value="1"/>
</dbReference>
<dbReference type="NCBIfam" id="NF001208">
    <property type="entry name" value="PRK00174.1"/>
    <property type="match status" value="1"/>
</dbReference>
<dbReference type="PANTHER" id="PTHR24095">
    <property type="entry name" value="ACETYL-COENZYME A SYNTHETASE"/>
    <property type="match status" value="1"/>
</dbReference>
<dbReference type="PANTHER" id="PTHR24095:SF243">
    <property type="entry name" value="ACETYL-COENZYME A SYNTHETASE"/>
    <property type="match status" value="1"/>
</dbReference>
<dbReference type="Pfam" id="PF16177">
    <property type="entry name" value="ACAS_N"/>
    <property type="match status" value="1"/>
</dbReference>
<dbReference type="Pfam" id="PF00501">
    <property type="entry name" value="AMP-binding"/>
    <property type="match status" value="1"/>
</dbReference>
<dbReference type="Pfam" id="PF13193">
    <property type="entry name" value="AMP-binding_C"/>
    <property type="match status" value="1"/>
</dbReference>
<dbReference type="SUPFAM" id="SSF56801">
    <property type="entry name" value="Acetyl-CoA synthetase-like"/>
    <property type="match status" value="1"/>
</dbReference>
<dbReference type="PROSITE" id="PS00455">
    <property type="entry name" value="AMP_BINDING"/>
    <property type="match status" value="1"/>
</dbReference>
<gene>
    <name evidence="1" type="primary">acsA</name>
    <name type="ordered locus">Sputw3181_1659</name>
</gene>
<accession>A1RIK1</accession>
<keyword id="KW-0007">Acetylation</keyword>
<keyword id="KW-0067">ATP-binding</keyword>
<keyword id="KW-0436">Ligase</keyword>
<keyword id="KW-0460">Magnesium</keyword>
<keyword id="KW-0479">Metal-binding</keyword>
<keyword id="KW-0547">Nucleotide-binding</keyword>
<sequence>MSSQSLYKVSGNIAANALVNNEQYKTMYQESIVNPEGFWREHGKRIDWIKPYTKIKKTSFDDHNLSINWFYDGTLNASANCLDRHLAEHSDRVAIIWEGDNASEQRKITYGELHADVCKFANALRSQGVRRGDIVTIYMPMVPEAAVAMLACARIGAVHSVVFGGFSPDSIASRVIDGKSKVVITSDEGMRGGRAIPLKRNIDDALNHPDVTSVEKVIVLKRTGGKIDWVEGRDVWWHSLLETASEHCQPEEMGAEDPLFLLYTSGSTGNPKGVLHTTGGYMVYASMTHEYVFDYKAGEVYWCTADVGWITGHSYMVYGPLANGATVLIHEGVPNHPSPARLGEMIDRHKVNILYTAPTLIRALMAEGKQHFDQFDGSTLRIMGSVGEPINPEAWRWYHEVIGHEHCPIVDTWWQTETGGILITPLPGATDTKPGSATRPFFGVQPALVDNMGNILEGENEGNLVLLDSWPGQMRTVYGDHERFVLTYFKTFRGMYFTGDGARRDEDGYYWITGRVDDVINVSGHRLGTAEVESALVSHELVAEAAVVGYPHDIKGQGIYAYVTLTRGTEESEELRQELRQWVRKEIGALATPDLIQWASGLPKTRSGKIMRRFLRKIAANEVTNLGDASTLADPAVIETLIETRLNRTE</sequence>
<comment type="function">
    <text evidence="1">Catalyzes the conversion of acetate into acetyl-CoA (AcCoA), an essential intermediate at the junction of anabolic and catabolic pathways. AcsA undergoes a two-step reaction. In the first half reaction, AcsA combines acetate with ATP to form acetyl-adenylate (AcAMP) intermediate. In the second half reaction, it can then transfer the acetyl group from AcAMP to the sulfhydryl group of CoA, forming the product AcCoA.</text>
</comment>
<comment type="catalytic activity">
    <reaction evidence="1">
        <text>acetate + ATP + CoA = acetyl-CoA + AMP + diphosphate</text>
        <dbReference type="Rhea" id="RHEA:23176"/>
        <dbReference type="ChEBI" id="CHEBI:30089"/>
        <dbReference type="ChEBI" id="CHEBI:30616"/>
        <dbReference type="ChEBI" id="CHEBI:33019"/>
        <dbReference type="ChEBI" id="CHEBI:57287"/>
        <dbReference type="ChEBI" id="CHEBI:57288"/>
        <dbReference type="ChEBI" id="CHEBI:456215"/>
        <dbReference type="EC" id="6.2.1.1"/>
    </reaction>
</comment>
<comment type="cofactor">
    <cofactor evidence="1">
        <name>Mg(2+)</name>
        <dbReference type="ChEBI" id="CHEBI:18420"/>
    </cofactor>
</comment>
<comment type="PTM">
    <text evidence="1">Acetylated. Deacetylation by the SIR2-homolog deacetylase activates the enzyme.</text>
</comment>
<comment type="similarity">
    <text evidence="1">Belongs to the ATP-dependent AMP-binding enzyme family.</text>
</comment>
<reference key="1">
    <citation type="submission" date="2006-12" db="EMBL/GenBank/DDBJ databases">
        <title>Complete sequence of Shewanella sp. W3-18-1.</title>
        <authorList>
            <consortium name="US DOE Joint Genome Institute"/>
            <person name="Copeland A."/>
            <person name="Lucas S."/>
            <person name="Lapidus A."/>
            <person name="Barry K."/>
            <person name="Detter J.C."/>
            <person name="Glavina del Rio T."/>
            <person name="Hammon N."/>
            <person name="Israni S."/>
            <person name="Dalin E."/>
            <person name="Tice H."/>
            <person name="Pitluck S."/>
            <person name="Chain P."/>
            <person name="Malfatti S."/>
            <person name="Shin M."/>
            <person name="Vergez L."/>
            <person name="Schmutz J."/>
            <person name="Larimer F."/>
            <person name="Land M."/>
            <person name="Hauser L."/>
            <person name="Kyrpides N."/>
            <person name="Lykidis A."/>
            <person name="Tiedje J."/>
            <person name="Richardson P."/>
        </authorList>
    </citation>
    <scope>NUCLEOTIDE SEQUENCE [LARGE SCALE GENOMIC DNA]</scope>
    <source>
        <strain>W3-18-1</strain>
    </source>
</reference>
<proteinExistence type="inferred from homology"/>
<protein>
    <recommendedName>
        <fullName evidence="1">Acetyl-coenzyme A synthetase</fullName>
        <shortName evidence="1">AcCoA synthetase</shortName>
        <shortName evidence="1">Acs</shortName>
        <ecNumber evidence="1">6.2.1.1</ecNumber>
    </recommendedName>
    <alternativeName>
        <fullName evidence="1">Acetate--CoA ligase</fullName>
    </alternativeName>
    <alternativeName>
        <fullName evidence="1">Acyl-activating enzyme</fullName>
    </alternativeName>
</protein>